<accession>B1YNS0</accession>
<keyword id="KW-0093">Biotin biosynthesis</keyword>
<keyword id="KW-0663">Pyridoxal phosphate</keyword>
<keyword id="KW-0808">Transferase</keyword>
<dbReference type="EC" id="2.3.1.47" evidence="1"/>
<dbReference type="EMBL" id="CP001025">
    <property type="protein sequence ID" value="ACB65320.1"/>
    <property type="molecule type" value="Genomic_DNA"/>
</dbReference>
<dbReference type="RefSeq" id="WP_012364830.1">
    <property type="nucleotide sequence ID" value="NC_010551.1"/>
</dbReference>
<dbReference type="SMR" id="B1YNS0"/>
<dbReference type="KEGG" id="bac:BamMC406_2844"/>
<dbReference type="HOGENOM" id="CLU_015846_11_2_4"/>
<dbReference type="OrthoDB" id="9807157at2"/>
<dbReference type="UniPathway" id="UPA00078"/>
<dbReference type="Proteomes" id="UP000001680">
    <property type="component" value="Chromosome 1"/>
</dbReference>
<dbReference type="GO" id="GO:0008710">
    <property type="term" value="F:8-amino-7-oxononanoate synthase activity"/>
    <property type="evidence" value="ECO:0007669"/>
    <property type="project" value="UniProtKB-UniRule"/>
</dbReference>
<dbReference type="GO" id="GO:0030170">
    <property type="term" value="F:pyridoxal phosphate binding"/>
    <property type="evidence" value="ECO:0007669"/>
    <property type="project" value="UniProtKB-UniRule"/>
</dbReference>
<dbReference type="GO" id="GO:0009102">
    <property type="term" value="P:biotin biosynthetic process"/>
    <property type="evidence" value="ECO:0007669"/>
    <property type="project" value="UniProtKB-UniRule"/>
</dbReference>
<dbReference type="Gene3D" id="3.90.1150.10">
    <property type="entry name" value="Aspartate Aminotransferase, domain 1"/>
    <property type="match status" value="1"/>
</dbReference>
<dbReference type="Gene3D" id="3.40.640.10">
    <property type="entry name" value="Type I PLP-dependent aspartate aminotransferase-like (Major domain)"/>
    <property type="match status" value="1"/>
</dbReference>
<dbReference type="HAMAP" id="MF_01693">
    <property type="entry name" value="BioF_aminotrans_2"/>
    <property type="match status" value="1"/>
</dbReference>
<dbReference type="InterPro" id="IPR004839">
    <property type="entry name" value="Aminotransferase_I/II_large"/>
</dbReference>
<dbReference type="InterPro" id="IPR050087">
    <property type="entry name" value="AON_synthase_class-II"/>
</dbReference>
<dbReference type="InterPro" id="IPR004723">
    <property type="entry name" value="AONS_Archaea/Proteobacteria"/>
</dbReference>
<dbReference type="InterPro" id="IPR022834">
    <property type="entry name" value="AONS_Proteobacteria"/>
</dbReference>
<dbReference type="InterPro" id="IPR015424">
    <property type="entry name" value="PyrdxlP-dep_Trfase"/>
</dbReference>
<dbReference type="InterPro" id="IPR015421">
    <property type="entry name" value="PyrdxlP-dep_Trfase_major"/>
</dbReference>
<dbReference type="InterPro" id="IPR015422">
    <property type="entry name" value="PyrdxlP-dep_Trfase_small"/>
</dbReference>
<dbReference type="NCBIfam" id="TIGR00858">
    <property type="entry name" value="bioF"/>
    <property type="match status" value="1"/>
</dbReference>
<dbReference type="PANTHER" id="PTHR13693:SF100">
    <property type="entry name" value="8-AMINO-7-OXONONANOATE SYNTHASE"/>
    <property type="match status" value="1"/>
</dbReference>
<dbReference type="PANTHER" id="PTHR13693">
    <property type="entry name" value="CLASS II AMINOTRANSFERASE/8-AMINO-7-OXONONANOATE SYNTHASE"/>
    <property type="match status" value="1"/>
</dbReference>
<dbReference type="Pfam" id="PF00155">
    <property type="entry name" value="Aminotran_1_2"/>
    <property type="match status" value="1"/>
</dbReference>
<dbReference type="SUPFAM" id="SSF53383">
    <property type="entry name" value="PLP-dependent transferases"/>
    <property type="match status" value="1"/>
</dbReference>
<feature type="chain" id="PRO_0000380927" description="8-amino-7-oxononanoate synthase">
    <location>
        <begin position="1"/>
        <end position="445"/>
    </location>
</feature>
<feature type="region of interest" description="Disordered" evidence="2">
    <location>
        <begin position="408"/>
        <end position="445"/>
    </location>
</feature>
<feature type="binding site" evidence="1">
    <location>
        <position position="40"/>
    </location>
    <ligand>
        <name>substrate</name>
    </ligand>
</feature>
<feature type="binding site" evidence="1">
    <location>
        <begin position="131"/>
        <end position="132"/>
    </location>
    <ligand>
        <name>pyridoxal 5'-phosphate</name>
        <dbReference type="ChEBI" id="CHEBI:597326"/>
    </ligand>
</feature>
<feature type="binding site" evidence="1">
    <location>
        <position position="156"/>
    </location>
    <ligand>
        <name>substrate</name>
    </ligand>
</feature>
<feature type="binding site" evidence="1">
    <location>
        <position position="202"/>
    </location>
    <ligand>
        <name>pyridoxal 5'-phosphate</name>
        <dbReference type="ChEBI" id="CHEBI:597326"/>
    </ligand>
</feature>
<feature type="binding site" evidence="1">
    <location>
        <position position="230"/>
    </location>
    <ligand>
        <name>pyridoxal 5'-phosphate</name>
        <dbReference type="ChEBI" id="CHEBI:597326"/>
    </ligand>
</feature>
<feature type="binding site" evidence="1">
    <location>
        <position position="258"/>
    </location>
    <ligand>
        <name>pyridoxal 5'-phosphate</name>
        <dbReference type="ChEBI" id="CHEBI:597326"/>
    </ligand>
</feature>
<feature type="binding site" evidence="1">
    <location>
        <position position="377"/>
    </location>
    <ligand>
        <name>substrate</name>
    </ligand>
</feature>
<feature type="modified residue" description="N6-(pyridoxal phosphate)lysine" evidence="1">
    <location>
        <position position="261"/>
    </location>
</feature>
<comment type="function">
    <text evidence="1">Catalyzes the decarboxylative condensation of pimeloyl-[acyl-carrier protein] and L-alanine to produce 8-amino-7-oxononanoate (AON), [acyl-carrier protein], and carbon dioxide.</text>
</comment>
<comment type="catalytic activity">
    <reaction evidence="1">
        <text>6-carboxyhexanoyl-[ACP] + L-alanine + H(+) = (8S)-8-amino-7-oxononanoate + holo-[ACP] + CO2</text>
        <dbReference type="Rhea" id="RHEA:42288"/>
        <dbReference type="Rhea" id="RHEA-COMP:9685"/>
        <dbReference type="Rhea" id="RHEA-COMP:9955"/>
        <dbReference type="ChEBI" id="CHEBI:15378"/>
        <dbReference type="ChEBI" id="CHEBI:16526"/>
        <dbReference type="ChEBI" id="CHEBI:57972"/>
        <dbReference type="ChEBI" id="CHEBI:64479"/>
        <dbReference type="ChEBI" id="CHEBI:78846"/>
        <dbReference type="ChEBI" id="CHEBI:149468"/>
        <dbReference type="EC" id="2.3.1.47"/>
    </reaction>
</comment>
<comment type="cofactor">
    <cofactor evidence="1">
        <name>pyridoxal 5'-phosphate</name>
        <dbReference type="ChEBI" id="CHEBI:597326"/>
    </cofactor>
</comment>
<comment type="pathway">
    <text evidence="1">Cofactor biosynthesis; biotin biosynthesis.</text>
</comment>
<comment type="subunit">
    <text evidence="1">Homodimer.</text>
</comment>
<comment type="similarity">
    <text evidence="1">Belongs to the class-II pyridoxal-phosphate-dependent aminotransferase family. BioF subfamily.</text>
</comment>
<name>BIOF_BURA4</name>
<protein>
    <recommendedName>
        <fullName evidence="1">8-amino-7-oxononanoate synthase</fullName>
        <shortName evidence="1">AONS</shortName>
        <ecNumber evidence="1">2.3.1.47</ecNumber>
    </recommendedName>
    <alternativeName>
        <fullName evidence="1">7-keto-8-amino-pelargonic acid synthase</fullName>
        <shortName evidence="1">7-KAP synthase</shortName>
        <shortName evidence="1">KAPA synthase</shortName>
    </alternativeName>
    <alternativeName>
        <fullName evidence="1">8-amino-7-ketopelargonate synthase</fullName>
    </alternativeName>
</protein>
<proteinExistence type="inferred from homology"/>
<reference key="1">
    <citation type="submission" date="2008-04" db="EMBL/GenBank/DDBJ databases">
        <title>Complete sequence of chromosome 1 of Burkholderia ambifaria MC40-6.</title>
        <authorList>
            <person name="Copeland A."/>
            <person name="Lucas S."/>
            <person name="Lapidus A."/>
            <person name="Glavina del Rio T."/>
            <person name="Dalin E."/>
            <person name="Tice H."/>
            <person name="Pitluck S."/>
            <person name="Chain P."/>
            <person name="Malfatti S."/>
            <person name="Shin M."/>
            <person name="Vergez L."/>
            <person name="Lang D."/>
            <person name="Schmutz J."/>
            <person name="Larimer F."/>
            <person name="Land M."/>
            <person name="Hauser L."/>
            <person name="Kyrpides N."/>
            <person name="Lykidis A."/>
            <person name="Ramette A."/>
            <person name="Konstantinidis K."/>
            <person name="Tiedje J."/>
            <person name="Richardson P."/>
        </authorList>
    </citation>
    <scope>NUCLEOTIDE SEQUENCE [LARGE SCALE GENOMIC DNA]</scope>
    <source>
        <strain>MC40-6</strain>
    </source>
</reference>
<gene>
    <name evidence="1" type="primary">bioF</name>
    <name type="ordered locus">BamMC406_2844</name>
</gene>
<sequence length="445" mass="46402">MTRTAPSSLRSLPAEGAAATDLLDTLQRGLAELDAQGLRRVRRTADTACDAHMRVDGRDIVGFASNDYLGLAAHPALVAAFAEGARRYGSGSGGSHLLGGHSRAHATLEDELAGFAGGFSDAPRALYFSTGYMANLAAMTALTGKHATIFSDALNHASLIDGIRLSRANVQVYPHADMAALAALLDASDAETKLIVSDTVFSMDGDIAPLAELVALAERHGAWLVVDDAHGFGVLGPQGRGALAAAALRSPNLIYVGTLGKAAGVAGAFVIAHETVIEWMIQRARSYIFTTAAPPAVAHAVSASLKVIAGDEGDARRAHLAALIERTRALLRMTRWQPVDSHTAVQPLVIGSNDATLAAMRSLDAHGLWVPAIRPPTVPAGTSRLRVSLSAAHSFDDLARLEAALIEASEGQTRRDAEQPPRSLRSLPPEGAAASLGAARRETAA</sequence>
<evidence type="ECO:0000255" key="1">
    <source>
        <dbReference type="HAMAP-Rule" id="MF_01693"/>
    </source>
</evidence>
<evidence type="ECO:0000256" key="2">
    <source>
        <dbReference type="SAM" id="MobiDB-lite"/>
    </source>
</evidence>
<organism>
    <name type="scientific">Burkholderia ambifaria (strain MC40-6)</name>
    <dbReference type="NCBI Taxonomy" id="398577"/>
    <lineage>
        <taxon>Bacteria</taxon>
        <taxon>Pseudomonadati</taxon>
        <taxon>Pseudomonadota</taxon>
        <taxon>Betaproteobacteria</taxon>
        <taxon>Burkholderiales</taxon>
        <taxon>Burkholderiaceae</taxon>
        <taxon>Burkholderia</taxon>
        <taxon>Burkholderia cepacia complex</taxon>
    </lineage>
</organism>